<sequence>MADNEILQMHDLKPAPGAKKDRTRVGRGEGSKGKTAGRGAKGQTKRNHVRPGFEGGQLPLYMRLPKLRGFKNPFKVEFQVINIARLVELFPEGGEVAVADLIAKGAVRDNAPVKVLGDGETTVAFTLKGVKASASAKSKIEAAGGSVSED</sequence>
<organism>
    <name type="scientific">Bifidobacterium longum (strain DJO10A)</name>
    <dbReference type="NCBI Taxonomy" id="205913"/>
    <lineage>
        <taxon>Bacteria</taxon>
        <taxon>Bacillati</taxon>
        <taxon>Actinomycetota</taxon>
        <taxon>Actinomycetes</taxon>
        <taxon>Bifidobacteriales</taxon>
        <taxon>Bifidobacteriaceae</taxon>
        <taxon>Bifidobacterium</taxon>
    </lineage>
</organism>
<feature type="chain" id="PRO_1000142778" description="Large ribosomal subunit protein uL15">
    <location>
        <begin position="1"/>
        <end position="150"/>
    </location>
</feature>
<feature type="region of interest" description="Disordered" evidence="2">
    <location>
        <begin position="1"/>
        <end position="55"/>
    </location>
</feature>
<feature type="compositionally biased region" description="Basic and acidic residues" evidence="2">
    <location>
        <begin position="8"/>
        <end position="32"/>
    </location>
</feature>
<evidence type="ECO:0000255" key="1">
    <source>
        <dbReference type="HAMAP-Rule" id="MF_01341"/>
    </source>
</evidence>
<evidence type="ECO:0000256" key="2">
    <source>
        <dbReference type="SAM" id="MobiDB-lite"/>
    </source>
</evidence>
<evidence type="ECO:0000305" key="3"/>
<gene>
    <name evidence="1" type="primary">rplO</name>
    <name type="ordered locus">BLD_1726</name>
</gene>
<name>RL15_BIFLD</name>
<proteinExistence type="inferred from homology"/>
<reference key="1">
    <citation type="journal article" date="2008" name="BMC Genomics">
        <title>Comparative genomic analysis of the gut bacterium Bifidobacterium longum reveals loci susceptible to deletion during pure culture growth.</title>
        <authorList>
            <person name="Lee J.H."/>
            <person name="Karamychev V.N."/>
            <person name="Kozyavkin S.A."/>
            <person name="Mills D."/>
            <person name="Pavlov A.R."/>
            <person name="Pavlova N.V."/>
            <person name="Polouchine N.N."/>
            <person name="Richardson P.M."/>
            <person name="Shakhova V.V."/>
            <person name="Slesarev A.I."/>
            <person name="Weimer B."/>
            <person name="O'Sullivan D.J."/>
        </authorList>
    </citation>
    <scope>NUCLEOTIDE SEQUENCE [LARGE SCALE GENOMIC DNA]</scope>
    <source>
        <strain>DJO10A</strain>
    </source>
</reference>
<comment type="function">
    <text evidence="1">Binds to the 23S rRNA.</text>
</comment>
<comment type="subunit">
    <text evidence="1">Part of the 50S ribosomal subunit.</text>
</comment>
<comment type="similarity">
    <text evidence="1">Belongs to the universal ribosomal protein uL15 family.</text>
</comment>
<protein>
    <recommendedName>
        <fullName evidence="1">Large ribosomal subunit protein uL15</fullName>
    </recommendedName>
    <alternativeName>
        <fullName evidence="3">50S ribosomal protein L15</fullName>
    </alternativeName>
</protein>
<dbReference type="EMBL" id="CP000605">
    <property type="protein sequence ID" value="ACD99171.1"/>
    <property type="molecule type" value="Genomic_DNA"/>
</dbReference>
<dbReference type="RefSeq" id="WP_007057268.1">
    <property type="nucleotide sequence ID" value="NC_010816.1"/>
</dbReference>
<dbReference type="SMR" id="B3DQD3"/>
<dbReference type="KEGG" id="blj:BLD_1726"/>
<dbReference type="HOGENOM" id="CLU_055188_4_1_11"/>
<dbReference type="Proteomes" id="UP000002419">
    <property type="component" value="Chromosome"/>
</dbReference>
<dbReference type="GO" id="GO:0022625">
    <property type="term" value="C:cytosolic large ribosomal subunit"/>
    <property type="evidence" value="ECO:0007669"/>
    <property type="project" value="TreeGrafter"/>
</dbReference>
<dbReference type="GO" id="GO:0019843">
    <property type="term" value="F:rRNA binding"/>
    <property type="evidence" value="ECO:0007669"/>
    <property type="project" value="UniProtKB-UniRule"/>
</dbReference>
<dbReference type="GO" id="GO:0003735">
    <property type="term" value="F:structural constituent of ribosome"/>
    <property type="evidence" value="ECO:0007669"/>
    <property type="project" value="InterPro"/>
</dbReference>
<dbReference type="GO" id="GO:0006412">
    <property type="term" value="P:translation"/>
    <property type="evidence" value="ECO:0007669"/>
    <property type="project" value="UniProtKB-UniRule"/>
</dbReference>
<dbReference type="Gene3D" id="3.100.10.10">
    <property type="match status" value="1"/>
</dbReference>
<dbReference type="HAMAP" id="MF_01341">
    <property type="entry name" value="Ribosomal_uL15"/>
    <property type="match status" value="1"/>
</dbReference>
<dbReference type="InterPro" id="IPR030878">
    <property type="entry name" value="Ribosomal_uL15"/>
</dbReference>
<dbReference type="InterPro" id="IPR021131">
    <property type="entry name" value="Ribosomal_uL15/eL18"/>
</dbReference>
<dbReference type="InterPro" id="IPR036227">
    <property type="entry name" value="Ribosomal_uL15/eL18_sf"/>
</dbReference>
<dbReference type="InterPro" id="IPR005749">
    <property type="entry name" value="Ribosomal_uL15_bac-type"/>
</dbReference>
<dbReference type="NCBIfam" id="TIGR01071">
    <property type="entry name" value="rplO_bact"/>
    <property type="match status" value="1"/>
</dbReference>
<dbReference type="PANTHER" id="PTHR12934">
    <property type="entry name" value="50S RIBOSOMAL PROTEIN L15"/>
    <property type="match status" value="1"/>
</dbReference>
<dbReference type="PANTHER" id="PTHR12934:SF11">
    <property type="entry name" value="LARGE RIBOSOMAL SUBUNIT PROTEIN UL15M"/>
    <property type="match status" value="1"/>
</dbReference>
<dbReference type="Pfam" id="PF00828">
    <property type="entry name" value="Ribosomal_L27A"/>
    <property type="match status" value="1"/>
</dbReference>
<dbReference type="SUPFAM" id="SSF52080">
    <property type="entry name" value="Ribosomal proteins L15p and L18e"/>
    <property type="match status" value="1"/>
</dbReference>
<accession>B3DQD3</accession>
<keyword id="KW-0687">Ribonucleoprotein</keyword>
<keyword id="KW-0689">Ribosomal protein</keyword>
<keyword id="KW-0694">RNA-binding</keyword>
<keyword id="KW-0699">rRNA-binding</keyword>